<proteinExistence type="evidence at protein level"/>
<dbReference type="EMBL" id="AK023541">
    <property type="protein sequence ID" value="BAB14602.1"/>
    <property type="status" value="ALT_INIT"/>
    <property type="molecule type" value="mRNA"/>
</dbReference>
<dbReference type="EMBL" id="AK027398">
    <property type="protein sequence ID" value="BAB55084.1"/>
    <property type="molecule type" value="mRNA"/>
</dbReference>
<dbReference type="EMBL" id="AB209710">
    <property type="protein sequence ID" value="BAD92947.2"/>
    <property type="status" value="ALT_INIT"/>
    <property type="molecule type" value="mRNA"/>
</dbReference>
<dbReference type="EMBL" id="AC135050">
    <property type="status" value="NOT_ANNOTATED_CDS"/>
    <property type="molecule type" value="Genomic_DNA"/>
</dbReference>
<dbReference type="EMBL" id="BC021997">
    <property type="protein sequence ID" value="AAH21997.1"/>
    <property type="molecule type" value="mRNA"/>
</dbReference>
<dbReference type="CCDS" id="CCDS10701.1">
    <molecule id="Q96K58-1"/>
</dbReference>
<dbReference type="CCDS" id="CCDS54003.1">
    <molecule id="Q96K58-2"/>
</dbReference>
<dbReference type="RefSeq" id="NP_001166139.1">
    <molecule id="Q96K58-1"/>
    <property type="nucleotide sequence ID" value="NM_001172668.2"/>
</dbReference>
<dbReference type="RefSeq" id="NP_001166140.1">
    <molecule id="Q96K58-2"/>
    <property type="nucleotide sequence ID" value="NM_001172669.2"/>
</dbReference>
<dbReference type="RefSeq" id="NP_001166141.1">
    <molecule id="Q96K58-1"/>
    <property type="nucleotide sequence ID" value="NM_001172670.2"/>
</dbReference>
<dbReference type="RefSeq" id="NP_078982.3">
    <molecule id="Q96K58-1"/>
    <property type="nucleotide sequence ID" value="NM_024706.4"/>
</dbReference>
<dbReference type="SMR" id="Q96K58"/>
<dbReference type="BioGRID" id="122868">
    <property type="interactions" value="262"/>
</dbReference>
<dbReference type="FunCoup" id="Q96K58">
    <property type="interactions" value="915"/>
</dbReference>
<dbReference type="IntAct" id="Q96K58">
    <property type="interactions" value="217"/>
</dbReference>
<dbReference type="STRING" id="9606.ENSP00000442573"/>
<dbReference type="iPTMnet" id="Q96K58"/>
<dbReference type="PhosphoSitePlus" id="Q96K58"/>
<dbReference type="BioMuta" id="ZNF668"/>
<dbReference type="DMDM" id="306526260"/>
<dbReference type="jPOST" id="Q96K58"/>
<dbReference type="MassIVE" id="Q96K58"/>
<dbReference type="PaxDb" id="9606-ENSP00000442573"/>
<dbReference type="PeptideAtlas" id="Q96K58"/>
<dbReference type="ProteomicsDB" id="10221"/>
<dbReference type="ProteomicsDB" id="77043">
    <molecule id="Q96K58-1"/>
</dbReference>
<dbReference type="Pumba" id="Q96K58"/>
<dbReference type="Antibodypedia" id="13908">
    <property type="antibodies" value="111 antibodies from 27 providers"/>
</dbReference>
<dbReference type="DNASU" id="79759"/>
<dbReference type="Ensembl" id="ENST00000300849.5">
    <molecule id="Q96K58-1"/>
    <property type="protein sequence ID" value="ENSP00000300849.4"/>
    <property type="gene ID" value="ENSG00000167394.13"/>
</dbReference>
<dbReference type="Ensembl" id="ENST00000394983.6">
    <molecule id="Q96K58-1"/>
    <property type="protein sequence ID" value="ENSP00000378434.2"/>
    <property type="gene ID" value="ENSG00000167394.13"/>
</dbReference>
<dbReference type="Ensembl" id="ENST00000426488.6">
    <molecule id="Q96K58-2"/>
    <property type="protein sequence ID" value="ENSP00000403975.2"/>
    <property type="gene ID" value="ENSG00000167394.13"/>
</dbReference>
<dbReference type="Ensembl" id="ENST00000535577.5">
    <molecule id="Q96K58-1"/>
    <property type="protein sequence ID" value="ENSP00000441349.1"/>
    <property type="gene ID" value="ENSG00000167394.13"/>
</dbReference>
<dbReference type="Ensembl" id="ENST00000538906.5">
    <molecule id="Q96K58-1"/>
    <property type="protein sequence ID" value="ENSP00000440149.1"/>
    <property type="gene ID" value="ENSG00000167394.13"/>
</dbReference>
<dbReference type="Ensembl" id="ENST00000539836.3">
    <molecule id="Q96K58-2"/>
    <property type="protein sequence ID" value="ENSP00000442573.3"/>
    <property type="gene ID" value="ENSG00000167394.13"/>
</dbReference>
<dbReference type="GeneID" id="79759"/>
<dbReference type="KEGG" id="hsa:79759"/>
<dbReference type="MANE-Select" id="ENST00000300849.5">
    <property type="protein sequence ID" value="ENSP00000300849.4"/>
    <property type="RefSeq nucleotide sequence ID" value="NM_024706.5"/>
    <property type="RefSeq protein sequence ID" value="NP_078982.3"/>
</dbReference>
<dbReference type="UCSC" id="uc002eao.4">
    <molecule id="Q96K58-1"/>
    <property type="organism name" value="human"/>
</dbReference>
<dbReference type="AGR" id="HGNC:25821"/>
<dbReference type="CTD" id="79759"/>
<dbReference type="DisGeNET" id="79759"/>
<dbReference type="GeneCards" id="ZNF668"/>
<dbReference type="HGNC" id="HGNC:25821">
    <property type="gene designation" value="ZNF668"/>
</dbReference>
<dbReference type="HPA" id="ENSG00000167394">
    <property type="expression patterns" value="Low tissue specificity"/>
</dbReference>
<dbReference type="MalaCards" id="ZNF668"/>
<dbReference type="MIM" id="617103">
    <property type="type" value="gene"/>
</dbReference>
<dbReference type="MIM" id="620194">
    <property type="type" value="phenotype"/>
</dbReference>
<dbReference type="neXtProt" id="NX_Q96K58"/>
<dbReference type="OpenTargets" id="ENSG00000167394"/>
<dbReference type="PharmGKB" id="PA142670515"/>
<dbReference type="VEuPathDB" id="HostDB:ENSG00000167394"/>
<dbReference type="eggNOG" id="KOG1721">
    <property type="taxonomic scope" value="Eukaryota"/>
</dbReference>
<dbReference type="GeneTree" id="ENSGT00920000149141"/>
<dbReference type="HOGENOM" id="CLU_002678_44_10_1"/>
<dbReference type="InParanoid" id="Q96K58"/>
<dbReference type="OrthoDB" id="1095242at2759"/>
<dbReference type="PAN-GO" id="Q96K58">
    <property type="GO annotations" value="4 GO annotations based on evolutionary models"/>
</dbReference>
<dbReference type="PhylomeDB" id="Q96K58"/>
<dbReference type="TreeFam" id="TF331849"/>
<dbReference type="PathwayCommons" id="Q96K58"/>
<dbReference type="Reactome" id="R-HSA-212436">
    <property type="pathway name" value="Generic Transcription Pathway"/>
</dbReference>
<dbReference type="SignaLink" id="Q96K58"/>
<dbReference type="BioGRID-ORCS" id="79759">
    <property type="hits" value="16 hits in 1177 CRISPR screens"/>
</dbReference>
<dbReference type="ChiTaRS" id="ZNF668">
    <property type="organism name" value="human"/>
</dbReference>
<dbReference type="GenomeRNAi" id="79759"/>
<dbReference type="Pharos" id="Q96K58">
    <property type="development level" value="Tbio"/>
</dbReference>
<dbReference type="PRO" id="PR:Q96K58"/>
<dbReference type="Proteomes" id="UP000005640">
    <property type="component" value="Chromosome 16"/>
</dbReference>
<dbReference type="RNAct" id="Q96K58">
    <property type="molecule type" value="protein"/>
</dbReference>
<dbReference type="Bgee" id="ENSG00000167394">
    <property type="expression patterns" value="Expressed in primordial germ cell in gonad and 100 other cell types or tissues"/>
</dbReference>
<dbReference type="ExpressionAtlas" id="Q96K58">
    <property type="expression patterns" value="baseline and differential"/>
</dbReference>
<dbReference type="GO" id="GO:0005634">
    <property type="term" value="C:nucleus"/>
    <property type="evidence" value="ECO:0000318"/>
    <property type="project" value="GO_Central"/>
</dbReference>
<dbReference type="GO" id="GO:0001227">
    <property type="term" value="F:DNA-binding transcription repressor activity, RNA polymerase II-specific"/>
    <property type="evidence" value="ECO:0007669"/>
    <property type="project" value="Ensembl"/>
</dbReference>
<dbReference type="GO" id="GO:0000978">
    <property type="term" value="F:RNA polymerase II cis-regulatory region sequence-specific DNA binding"/>
    <property type="evidence" value="ECO:0007669"/>
    <property type="project" value="Ensembl"/>
</dbReference>
<dbReference type="GO" id="GO:0008270">
    <property type="term" value="F:zinc ion binding"/>
    <property type="evidence" value="ECO:0007669"/>
    <property type="project" value="UniProtKB-KW"/>
</dbReference>
<dbReference type="GO" id="GO:0006281">
    <property type="term" value="P:DNA repair"/>
    <property type="evidence" value="ECO:0000315"/>
    <property type="project" value="UniProtKB"/>
</dbReference>
<dbReference type="GO" id="GO:0006357">
    <property type="term" value="P:regulation of transcription by RNA polymerase II"/>
    <property type="evidence" value="ECO:0000318"/>
    <property type="project" value="GO_Central"/>
</dbReference>
<dbReference type="FunFam" id="3.30.160.60:FF:000012">
    <property type="entry name" value="RB-associated KRAB zinc finger protein-like"/>
    <property type="match status" value="1"/>
</dbReference>
<dbReference type="FunFam" id="3.30.160.60:FF:000100">
    <property type="entry name" value="Zinc finger 45-like"/>
    <property type="match status" value="1"/>
</dbReference>
<dbReference type="FunFam" id="3.30.160.60:FF:000643">
    <property type="entry name" value="Zinc finger protein 668"/>
    <property type="match status" value="1"/>
</dbReference>
<dbReference type="FunFam" id="3.30.160.60:FF:000916">
    <property type="entry name" value="Zinc finger protein 668"/>
    <property type="match status" value="1"/>
</dbReference>
<dbReference type="FunFam" id="3.30.160.60:FF:000973">
    <property type="entry name" value="Zinc finger protein 668"/>
    <property type="match status" value="1"/>
</dbReference>
<dbReference type="FunFam" id="3.30.160.60:FF:001052">
    <property type="entry name" value="Zinc finger protein 668"/>
    <property type="match status" value="1"/>
</dbReference>
<dbReference type="FunFam" id="3.30.160.60:FF:001206">
    <property type="entry name" value="Zinc finger protein 668"/>
    <property type="match status" value="1"/>
</dbReference>
<dbReference type="FunFam" id="3.30.160.60:FF:000495">
    <property type="entry name" value="zinc finger protein 668"/>
    <property type="match status" value="2"/>
</dbReference>
<dbReference type="FunFam" id="3.30.160.60:FF:000528">
    <property type="entry name" value="zinc finger protein 668"/>
    <property type="match status" value="2"/>
</dbReference>
<dbReference type="FunFam" id="3.30.160.60:FF:000995">
    <property type="entry name" value="zinc finger protein 668"/>
    <property type="match status" value="1"/>
</dbReference>
<dbReference type="FunFam" id="3.30.160.60:FF:001203">
    <property type="entry name" value="zinc finger protein 668"/>
    <property type="match status" value="1"/>
</dbReference>
<dbReference type="FunFam" id="3.30.160.60:FF:000093">
    <property type="entry name" value="zinc finger protein 668 isoform X1"/>
    <property type="match status" value="1"/>
</dbReference>
<dbReference type="Gene3D" id="3.30.160.60">
    <property type="entry name" value="Classic Zinc Finger"/>
    <property type="match status" value="14"/>
</dbReference>
<dbReference type="InterPro" id="IPR036236">
    <property type="entry name" value="Znf_C2H2_sf"/>
</dbReference>
<dbReference type="InterPro" id="IPR013087">
    <property type="entry name" value="Znf_C2H2_type"/>
</dbReference>
<dbReference type="PANTHER" id="PTHR24376">
    <property type="entry name" value="ZINC FINGER PROTEIN"/>
    <property type="match status" value="1"/>
</dbReference>
<dbReference type="Pfam" id="PF00096">
    <property type="entry name" value="zf-C2H2"/>
    <property type="match status" value="14"/>
</dbReference>
<dbReference type="SMART" id="SM00355">
    <property type="entry name" value="ZnF_C2H2"/>
    <property type="match status" value="16"/>
</dbReference>
<dbReference type="SUPFAM" id="SSF57667">
    <property type="entry name" value="beta-beta-alpha zinc fingers"/>
    <property type="match status" value="8"/>
</dbReference>
<dbReference type="PROSITE" id="PS00028">
    <property type="entry name" value="ZINC_FINGER_C2H2_1"/>
    <property type="match status" value="16"/>
</dbReference>
<dbReference type="PROSITE" id="PS50157">
    <property type="entry name" value="ZINC_FINGER_C2H2_2"/>
    <property type="match status" value="16"/>
</dbReference>
<accession>Q96K58</accession>
<accession>C9JHH8</accession>
<accession>F5H7E7</accession>
<accession>Q59EV1</accession>
<accession>Q8N669</accession>
<accession>Q9H8L4</accession>
<reference key="1">
    <citation type="journal article" date="2004" name="Nat. Genet.">
        <title>Complete sequencing and characterization of 21,243 full-length human cDNAs.</title>
        <authorList>
            <person name="Ota T."/>
            <person name="Suzuki Y."/>
            <person name="Nishikawa T."/>
            <person name="Otsuki T."/>
            <person name="Sugiyama T."/>
            <person name="Irie R."/>
            <person name="Wakamatsu A."/>
            <person name="Hayashi K."/>
            <person name="Sato H."/>
            <person name="Nagai K."/>
            <person name="Kimura K."/>
            <person name="Makita H."/>
            <person name="Sekine M."/>
            <person name="Obayashi M."/>
            <person name="Nishi T."/>
            <person name="Shibahara T."/>
            <person name="Tanaka T."/>
            <person name="Ishii S."/>
            <person name="Yamamoto J."/>
            <person name="Saito K."/>
            <person name="Kawai Y."/>
            <person name="Isono Y."/>
            <person name="Nakamura Y."/>
            <person name="Nagahari K."/>
            <person name="Murakami K."/>
            <person name="Yasuda T."/>
            <person name="Iwayanagi T."/>
            <person name="Wagatsuma M."/>
            <person name="Shiratori A."/>
            <person name="Sudo H."/>
            <person name="Hosoiri T."/>
            <person name="Kaku Y."/>
            <person name="Kodaira H."/>
            <person name="Kondo H."/>
            <person name="Sugawara M."/>
            <person name="Takahashi M."/>
            <person name="Kanda K."/>
            <person name="Yokoi T."/>
            <person name="Furuya T."/>
            <person name="Kikkawa E."/>
            <person name="Omura Y."/>
            <person name="Abe K."/>
            <person name="Kamihara K."/>
            <person name="Katsuta N."/>
            <person name="Sato K."/>
            <person name="Tanikawa M."/>
            <person name="Yamazaki M."/>
            <person name="Ninomiya K."/>
            <person name="Ishibashi T."/>
            <person name="Yamashita H."/>
            <person name="Murakawa K."/>
            <person name="Fujimori K."/>
            <person name="Tanai H."/>
            <person name="Kimata M."/>
            <person name="Watanabe M."/>
            <person name="Hiraoka S."/>
            <person name="Chiba Y."/>
            <person name="Ishida S."/>
            <person name="Ono Y."/>
            <person name="Takiguchi S."/>
            <person name="Watanabe S."/>
            <person name="Yosida M."/>
            <person name="Hotuta T."/>
            <person name="Kusano J."/>
            <person name="Kanehori K."/>
            <person name="Takahashi-Fujii A."/>
            <person name="Hara H."/>
            <person name="Tanase T.-O."/>
            <person name="Nomura Y."/>
            <person name="Togiya S."/>
            <person name="Komai F."/>
            <person name="Hara R."/>
            <person name="Takeuchi K."/>
            <person name="Arita M."/>
            <person name="Imose N."/>
            <person name="Musashino K."/>
            <person name="Yuuki H."/>
            <person name="Oshima A."/>
            <person name="Sasaki N."/>
            <person name="Aotsuka S."/>
            <person name="Yoshikawa Y."/>
            <person name="Matsunawa H."/>
            <person name="Ichihara T."/>
            <person name="Shiohata N."/>
            <person name="Sano S."/>
            <person name="Moriya S."/>
            <person name="Momiyama H."/>
            <person name="Satoh N."/>
            <person name="Takami S."/>
            <person name="Terashima Y."/>
            <person name="Suzuki O."/>
            <person name="Nakagawa S."/>
            <person name="Senoh A."/>
            <person name="Mizoguchi H."/>
            <person name="Goto Y."/>
            <person name="Shimizu F."/>
            <person name="Wakebe H."/>
            <person name="Hishigaki H."/>
            <person name="Watanabe T."/>
            <person name="Sugiyama A."/>
            <person name="Takemoto M."/>
            <person name="Kawakami B."/>
            <person name="Yamazaki M."/>
            <person name="Watanabe K."/>
            <person name="Kumagai A."/>
            <person name="Itakura S."/>
            <person name="Fukuzumi Y."/>
            <person name="Fujimori Y."/>
            <person name="Komiyama M."/>
            <person name="Tashiro H."/>
            <person name="Tanigami A."/>
            <person name="Fujiwara T."/>
            <person name="Ono T."/>
            <person name="Yamada K."/>
            <person name="Fujii Y."/>
            <person name="Ozaki K."/>
            <person name="Hirao M."/>
            <person name="Ohmori Y."/>
            <person name="Kawabata A."/>
            <person name="Hikiji T."/>
            <person name="Kobatake N."/>
            <person name="Inagaki H."/>
            <person name="Ikema Y."/>
            <person name="Okamoto S."/>
            <person name="Okitani R."/>
            <person name="Kawakami T."/>
            <person name="Noguchi S."/>
            <person name="Itoh T."/>
            <person name="Shigeta K."/>
            <person name="Senba T."/>
            <person name="Matsumura K."/>
            <person name="Nakajima Y."/>
            <person name="Mizuno T."/>
            <person name="Morinaga M."/>
            <person name="Sasaki M."/>
            <person name="Togashi T."/>
            <person name="Oyama M."/>
            <person name="Hata H."/>
            <person name="Watanabe M."/>
            <person name="Komatsu T."/>
            <person name="Mizushima-Sugano J."/>
            <person name="Satoh T."/>
            <person name="Shirai Y."/>
            <person name="Takahashi Y."/>
            <person name="Nakagawa K."/>
            <person name="Okumura K."/>
            <person name="Nagase T."/>
            <person name="Nomura N."/>
            <person name="Kikuchi H."/>
            <person name="Masuho Y."/>
            <person name="Yamashita R."/>
            <person name="Nakai K."/>
            <person name="Yada T."/>
            <person name="Nakamura Y."/>
            <person name="Ohara O."/>
            <person name="Isogai T."/>
            <person name="Sugano S."/>
        </authorList>
    </citation>
    <scope>NUCLEOTIDE SEQUENCE [LARGE SCALE MRNA] (ISOFORM 1)</scope>
    <source>
        <tissue>Mammary gland</tissue>
        <tissue>Placenta</tissue>
    </source>
</reference>
<reference key="2">
    <citation type="submission" date="2005-03" db="EMBL/GenBank/DDBJ databases">
        <authorList>
            <person name="Totoki Y."/>
            <person name="Toyoda A."/>
            <person name="Takeda T."/>
            <person name="Sakaki Y."/>
            <person name="Tanaka A."/>
            <person name="Yokoyama S."/>
            <person name="Ohara O."/>
            <person name="Nagase T."/>
            <person name="Kikuno R.F."/>
        </authorList>
    </citation>
    <scope>NUCLEOTIDE SEQUENCE [LARGE SCALE MRNA] (ISOFORM 1)</scope>
    <source>
        <tissue>Brain</tissue>
    </source>
</reference>
<reference key="3">
    <citation type="journal article" date="2004" name="Nature">
        <title>The sequence and analysis of duplication-rich human chromosome 16.</title>
        <authorList>
            <person name="Martin J."/>
            <person name="Han C."/>
            <person name="Gordon L.A."/>
            <person name="Terry A."/>
            <person name="Prabhakar S."/>
            <person name="She X."/>
            <person name="Xie G."/>
            <person name="Hellsten U."/>
            <person name="Chan Y.M."/>
            <person name="Altherr M."/>
            <person name="Couronne O."/>
            <person name="Aerts A."/>
            <person name="Bajorek E."/>
            <person name="Black S."/>
            <person name="Blumer H."/>
            <person name="Branscomb E."/>
            <person name="Brown N.C."/>
            <person name="Bruno W.J."/>
            <person name="Buckingham J.M."/>
            <person name="Callen D.F."/>
            <person name="Campbell C.S."/>
            <person name="Campbell M.L."/>
            <person name="Campbell E.W."/>
            <person name="Caoile C."/>
            <person name="Challacombe J.F."/>
            <person name="Chasteen L.A."/>
            <person name="Chertkov O."/>
            <person name="Chi H.C."/>
            <person name="Christensen M."/>
            <person name="Clark L.M."/>
            <person name="Cohn J.D."/>
            <person name="Denys M."/>
            <person name="Detter J.C."/>
            <person name="Dickson M."/>
            <person name="Dimitrijevic-Bussod M."/>
            <person name="Escobar J."/>
            <person name="Fawcett J.J."/>
            <person name="Flowers D."/>
            <person name="Fotopulos D."/>
            <person name="Glavina T."/>
            <person name="Gomez M."/>
            <person name="Gonzales E."/>
            <person name="Goodstein D."/>
            <person name="Goodwin L.A."/>
            <person name="Grady D.L."/>
            <person name="Grigoriev I."/>
            <person name="Groza M."/>
            <person name="Hammon N."/>
            <person name="Hawkins T."/>
            <person name="Haydu L."/>
            <person name="Hildebrand C.E."/>
            <person name="Huang W."/>
            <person name="Israni S."/>
            <person name="Jett J."/>
            <person name="Jewett P.B."/>
            <person name="Kadner K."/>
            <person name="Kimball H."/>
            <person name="Kobayashi A."/>
            <person name="Krawczyk M.-C."/>
            <person name="Leyba T."/>
            <person name="Longmire J.L."/>
            <person name="Lopez F."/>
            <person name="Lou Y."/>
            <person name="Lowry S."/>
            <person name="Ludeman T."/>
            <person name="Manohar C.F."/>
            <person name="Mark G.A."/>
            <person name="McMurray K.L."/>
            <person name="Meincke L.J."/>
            <person name="Morgan J."/>
            <person name="Moyzis R.K."/>
            <person name="Mundt M.O."/>
            <person name="Munk A.C."/>
            <person name="Nandkeshwar R.D."/>
            <person name="Pitluck S."/>
            <person name="Pollard M."/>
            <person name="Predki P."/>
            <person name="Parson-Quintana B."/>
            <person name="Ramirez L."/>
            <person name="Rash S."/>
            <person name="Retterer J."/>
            <person name="Ricke D.O."/>
            <person name="Robinson D.L."/>
            <person name="Rodriguez A."/>
            <person name="Salamov A."/>
            <person name="Saunders E.H."/>
            <person name="Scott D."/>
            <person name="Shough T."/>
            <person name="Stallings R.L."/>
            <person name="Stalvey M."/>
            <person name="Sutherland R.D."/>
            <person name="Tapia R."/>
            <person name="Tesmer J.G."/>
            <person name="Thayer N."/>
            <person name="Thompson L.S."/>
            <person name="Tice H."/>
            <person name="Torney D.C."/>
            <person name="Tran-Gyamfi M."/>
            <person name="Tsai M."/>
            <person name="Ulanovsky L.E."/>
            <person name="Ustaszewska A."/>
            <person name="Vo N."/>
            <person name="White P.S."/>
            <person name="Williams A.L."/>
            <person name="Wills P.L."/>
            <person name="Wu J.-R."/>
            <person name="Wu K."/>
            <person name="Yang J."/>
            <person name="DeJong P."/>
            <person name="Bruce D."/>
            <person name="Doggett N.A."/>
            <person name="Deaven L."/>
            <person name="Schmutz J."/>
            <person name="Grimwood J."/>
            <person name="Richardson P."/>
            <person name="Rokhsar D.S."/>
            <person name="Eichler E.E."/>
            <person name="Gilna P."/>
            <person name="Lucas S.M."/>
            <person name="Myers R.M."/>
            <person name="Rubin E.M."/>
            <person name="Pennacchio L.A."/>
        </authorList>
    </citation>
    <scope>NUCLEOTIDE SEQUENCE [LARGE SCALE GENOMIC DNA]</scope>
</reference>
<reference key="4">
    <citation type="journal article" date="2004" name="Genome Res.">
        <title>The status, quality, and expansion of the NIH full-length cDNA project: the Mammalian Gene Collection (MGC).</title>
        <authorList>
            <consortium name="The MGC Project Team"/>
        </authorList>
    </citation>
    <scope>NUCLEOTIDE SEQUENCE [LARGE SCALE MRNA] (ISOFORM 1)</scope>
    <scope>VARIANT GLU-304</scope>
    <source>
        <tissue>Skin</tissue>
    </source>
</reference>
<reference key="5">
    <citation type="journal article" date="2010" name="Sci. Signal.">
        <title>Quantitative phosphoproteomics reveals widespread full phosphorylation site occupancy during mitosis.</title>
        <authorList>
            <person name="Olsen J.V."/>
            <person name="Vermeulen M."/>
            <person name="Santamaria A."/>
            <person name="Kumar C."/>
            <person name="Miller M.L."/>
            <person name="Jensen L.J."/>
            <person name="Gnad F."/>
            <person name="Cox J."/>
            <person name="Jensen T.S."/>
            <person name="Nigg E.A."/>
            <person name="Brunak S."/>
            <person name="Mann M."/>
        </authorList>
    </citation>
    <scope>PHOSPHORYLATION [LARGE SCALE ANALYSIS] AT SER-387</scope>
    <scope>IDENTIFICATION BY MASS SPECTROMETRY [LARGE SCALE ANALYSIS]</scope>
    <source>
        <tissue>Cervix carcinoma</tissue>
    </source>
</reference>
<reference key="6">
    <citation type="journal article" date="2012" name="Proc. Natl. Acad. Sci. U.S.A.">
        <title>N-terminal acetylome analyses and functional insights of the N-terminal acetyltransferase NatB.</title>
        <authorList>
            <person name="Van Damme P."/>
            <person name="Lasa M."/>
            <person name="Polevoda B."/>
            <person name="Gazquez C."/>
            <person name="Elosegui-Artola A."/>
            <person name="Kim D.S."/>
            <person name="De Juan-Pardo E."/>
            <person name="Demeyer K."/>
            <person name="Hole K."/>
            <person name="Larrea E."/>
            <person name="Timmerman E."/>
            <person name="Prieto J."/>
            <person name="Arnesen T."/>
            <person name="Sherman F."/>
            <person name="Gevaert K."/>
            <person name="Aldabe R."/>
        </authorList>
    </citation>
    <scope>ACETYLATION [LARGE SCALE ANALYSIS] AT MET-1</scope>
    <scope>IDENTIFICATION BY MASS SPECTROMETRY [LARGE SCALE ANALYSIS]</scope>
</reference>
<reference key="7">
    <citation type="journal article" date="2013" name="J. Proteome Res.">
        <title>Toward a comprehensive characterization of a human cancer cell phosphoproteome.</title>
        <authorList>
            <person name="Zhou H."/>
            <person name="Di Palma S."/>
            <person name="Preisinger C."/>
            <person name="Peng M."/>
            <person name="Polat A.N."/>
            <person name="Heck A.J."/>
            <person name="Mohammed S."/>
        </authorList>
    </citation>
    <scope>PHOSPHORYLATION [LARGE SCALE ANALYSIS] AT SER-10</scope>
    <scope>IDENTIFICATION BY MASS SPECTROMETRY [LARGE SCALE ANALYSIS]</scope>
    <source>
        <tissue>Cervix carcinoma</tissue>
        <tissue>Erythroleukemia</tissue>
    </source>
</reference>
<reference key="8">
    <citation type="journal article" date="2017" name="Nat. Struct. Mol. Biol.">
        <title>Site-specific mapping of the human SUMO proteome reveals co-modification with phosphorylation.</title>
        <authorList>
            <person name="Hendriks I.A."/>
            <person name="Lyon D."/>
            <person name="Young C."/>
            <person name="Jensen L.J."/>
            <person name="Vertegaal A.C."/>
            <person name="Nielsen M.L."/>
        </authorList>
    </citation>
    <scope>SUMOYLATION [LARGE SCALE ANALYSIS] AT LYS-57; LYS-59; LYS-65; LYS-80; LYS-154 AND LYS-512</scope>
    <scope>IDENTIFICATION BY MASS SPECTROMETRY [LARGE SCALE ANALYSIS]</scope>
</reference>
<reference key="9">
    <citation type="journal article" date="2006" name="Science">
        <title>The consensus coding sequences of human breast and colorectal cancers.</title>
        <authorList>
            <person name="Sjoeblom T."/>
            <person name="Jones S."/>
            <person name="Wood L.D."/>
            <person name="Parsons D.W."/>
            <person name="Lin J."/>
            <person name="Barber T.D."/>
            <person name="Mandelker D."/>
            <person name="Leary R.J."/>
            <person name="Ptak J."/>
            <person name="Silliman N."/>
            <person name="Szabo S."/>
            <person name="Buckhaults P."/>
            <person name="Farrell C."/>
            <person name="Meeh P."/>
            <person name="Markowitz S.D."/>
            <person name="Willis J."/>
            <person name="Dawson D."/>
            <person name="Willson J.K.V."/>
            <person name="Gazdar A.F."/>
            <person name="Hartigan J."/>
            <person name="Wu L."/>
            <person name="Liu C."/>
            <person name="Parmigiani G."/>
            <person name="Park B.H."/>
            <person name="Bachman K.E."/>
            <person name="Papadopoulos N."/>
            <person name="Vogelstein B."/>
            <person name="Kinzler K.W."/>
            <person name="Velculescu V.E."/>
        </authorList>
    </citation>
    <scope>VARIANTS [LARGE SCALE ANALYSIS] THR-66; SER-286; ARG-331 AND GLN-556</scope>
</reference>
<reference key="10">
    <citation type="journal article" date="2016" name="Genet. Med.">
        <title>Accelerating matchmaking of novel dysmorphology syndromes through clinical and genomic characterization of a large cohort.</title>
        <authorList>
            <person name="Shaheen R."/>
            <person name="Patel N."/>
            <person name="Shamseldin H."/>
            <person name="Alzahrani F."/>
            <person name="Al-Yamany R."/>
            <person name="Almoisheer A."/>
            <person name="Ewida N."/>
            <person name="Anazi S."/>
            <person name="Alnemer M."/>
            <person name="Elsheikh M."/>
            <person name="Alfaleh K."/>
            <person name="Alshammari M."/>
            <person name="Alhashem A."/>
            <person name="Alangari A.A."/>
            <person name="Salih M.A."/>
            <person name="Kircher M."/>
            <person name="Daza R.M."/>
            <person name="Ibrahim N."/>
            <person name="Wakil S.M."/>
            <person name="Alaqeel A."/>
            <person name="Altowaijri I."/>
            <person name="Shendure J."/>
            <person name="Al-Habib A."/>
            <person name="Faqieh E."/>
            <person name="Alkuraya F.S."/>
        </authorList>
    </citation>
    <scope>INVOLVEMENT IN NEDGEF</scope>
    <scope>VARIANT NEDGEF 319-GLN--ALA-619 DEL</scope>
</reference>
<reference key="11">
    <citation type="journal article" date="2021" name="Hum. Genet.">
        <title>ZNF668 deficiency causes a recognizable disorder of DNA damage repair.</title>
        <authorList>
            <person name="Alsaif H.S."/>
            <person name="Al Ali H."/>
            <person name="Faqeih E."/>
            <person name="Ramadan S.M."/>
            <person name="Barth M."/>
            <person name="Colin E."/>
            <person name="Prouteau C."/>
            <person name="Bonneau D."/>
            <person name="Ziegler A."/>
            <person name="Alkuraya F.S."/>
        </authorList>
    </citation>
    <scope>VARIANTS NEDGEF 319-GLN--ALA-619 DEL AND 371-ARG--ALA-619 DEL</scope>
    <scope>CHARACTERIZATION OF VARIANTS NEDGEF 319-GLN--ALA-619 DEL AND 371-ARG--ALA-619 DEL</scope>
    <scope>FUNCTION</scope>
    <scope>SUBCELLULAR LOCATION</scope>
</reference>
<organism>
    <name type="scientific">Homo sapiens</name>
    <name type="common">Human</name>
    <dbReference type="NCBI Taxonomy" id="9606"/>
    <lineage>
        <taxon>Eukaryota</taxon>
        <taxon>Metazoa</taxon>
        <taxon>Chordata</taxon>
        <taxon>Craniata</taxon>
        <taxon>Vertebrata</taxon>
        <taxon>Euteleostomi</taxon>
        <taxon>Mammalia</taxon>
        <taxon>Eutheria</taxon>
        <taxon>Euarchontoglires</taxon>
        <taxon>Primates</taxon>
        <taxon>Haplorrhini</taxon>
        <taxon>Catarrhini</taxon>
        <taxon>Hominidae</taxon>
        <taxon>Homo</taxon>
    </lineage>
</organism>
<protein>
    <recommendedName>
        <fullName>Zinc finger protein 668</fullName>
    </recommendedName>
</protein>
<keyword id="KW-0007">Acetylation</keyword>
<keyword id="KW-0025">Alternative splicing</keyword>
<keyword id="KW-0225">Disease variant</keyword>
<keyword id="KW-0238">DNA-binding</keyword>
<keyword id="KW-0991">Intellectual disability</keyword>
<keyword id="KW-1017">Isopeptide bond</keyword>
<keyword id="KW-0479">Metal-binding</keyword>
<keyword id="KW-0539">Nucleus</keyword>
<keyword id="KW-0597">Phosphoprotein</keyword>
<keyword id="KW-1267">Proteomics identification</keyword>
<keyword id="KW-1185">Reference proteome</keyword>
<keyword id="KW-0677">Repeat</keyword>
<keyword id="KW-0804">Transcription</keyword>
<keyword id="KW-0805">Transcription regulation</keyword>
<keyword id="KW-0832">Ubl conjugation</keyword>
<keyword id="KW-0862">Zinc</keyword>
<keyword id="KW-0863">Zinc-finger</keyword>
<evidence type="ECO:0000255" key="1">
    <source>
        <dbReference type="PROSITE-ProRule" id="PRU00042"/>
    </source>
</evidence>
<evidence type="ECO:0000256" key="2">
    <source>
        <dbReference type="SAM" id="MobiDB-lite"/>
    </source>
</evidence>
<evidence type="ECO:0000269" key="3">
    <source>
    </source>
</evidence>
<evidence type="ECO:0000269" key="4">
    <source>
    </source>
</evidence>
<evidence type="ECO:0000269" key="5">
    <source>
    </source>
</evidence>
<evidence type="ECO:0000269" key="6">
    <source>
    </source>
</evidence>
<evidence type="ECO:0000305" key="7"/>
<evidence type="ECO:0007744" key="8">
    <source>
    </source>
</evidence>
<evidence type="ECO:0007744" key="9">
    <source>
    </source>
</evidence>
<evidence type="ECO:0007744" key="10">
    <source>
    </source>
</evidence>
<evidence type="ECO:0007744" key="11">
    <source>
    </source>
</evidence>
<name>ZN668_HUMAN</name>
<comment type="function">
    <text evidence="6">May be involved in transcriptional regulation. May play a role in DNA repair process.</text>
</comment>
<comment type="interaction">
    <interactant intactId="EBI-12817597">
        <id>Q96K58-2</id>
    </interactant>
    <interactant intactId="EBI-358049">
        <id>Q13895</id>
        <label>BYSL</label>
    </interactant>
    <organismsDiffer>false</organismsDiffer>
    <experiments>3</experiments>
</comment>
<comment type="interaction">
    <interactant intactId="EBI-12817597">
        <id>Q96K58-2</id>
    </interactant>
    <interactant intactId="EBI-1567797">
        <id>Q8WWY3</id>
        <label>PRPF31</label>
    </interactant>
    <organismsDiffer>false</organismsDiffer>
    <experiments>3</experiments>
</comment>
<comment type="interaction">
    <interactant intactId="EBI-12817597">
        <id>Q96K58-2</id>
    </interactant>
    <interactant intactId="EBI-741694">
        <id>P49910</id>
        <label>ZNF165</label>
    </interactant>
    <organismsDiffer>false</organismsDiffer>
    <experiments>3</experiments>
</comment>
<comment type="interaction">
    <interactant intactId="EBI-12817597">
        <id>Q96K58-2</id>
    </interactant>
    <interactant intactId="EBI-10177272">
        <id>P15622-3</id>
        <label>ZNF250</label>
    </interactant>
    <organismsDiffer>false</organismsDiffer>
    <experiments>3</experiments>
</comment>
<comment type="interaction">
    <interactant intactId="EBI-12817597">
        <id>Q96K58-2</id>
    </interactant>
    <interactant intactId="EBI-10240849">
        <id>Q3KQV3</id>
        <label>ZNF792</label>
    </interactant>
    <organismsDiffer>false</organismsDiffer>
    <experiments>3</experiments>
</comment>
<comment type="subcellular location">
    <subcellularLocation>
        <location evidence="6">Nucleus</location>
    </subcellularLocation>
</comment>
<comment type="alternative products">
    <event type="alternative splicing"/>
    <isoform>
        <id>Q96K58-1</id>
        <name>1</name>
        <sequence type="displayed"/>
    </isoform>
    <isoform>
        <id>Q96K58-2</id>
        <name>2</name>
        <sequence type="described" ref="VSP_053786"/>
    </isoform>
</comment>
<comment type="disease" evidence="5 6">
    <disease id="DI-06587">
        <name>Neurodevelopmental disorder with poor growth, large ears, and dysmorphic facies</name>
        <acronym>NEDGEF</acronym>
        <description>An autosomal recessive neurodevelopmental disorder characterized by severe global developmental delay, brain malformation, microcephaly, growth deficiency, and distinct facial dysmorphism. Disease severity is variable and death in infancy may occur.</description>
        <dbReference type="MIM" id="620194"/>
    </disease>
    <text>The disease is caused by variants affecting the gene represented in this entry.</text>
</comment>
<comment type="similarity">
    <text evidence="7">Belongs to the krueppel C2H2-type zinc-finger protein family.</text>
</comment>
<comment type="sequence caution" evidence="7">
    <conflict type="erroneous initiation">
        <sequence resource="EMBL-CDS" id="BAB14602"/>
    </conflict>
    <text>Truncated N-terminus.</text>
</comment>
<comment type="sequence caution" evidence="7">
    <conflict type="erroneous initiation">
        <sequence resource="EMBL-CDS" id="BAD92947"/>
    </conflict>
    <text>Extended N-terminus.</text>
</comment>
<feature type="chain" id="PRO_0000251478" description="Zinc finger protein 668">
    <location>
        <begin position="1"/>
        <end position="619"/>
    </location>
</feature>
<feature type="zinc finger region" description="C2H2-type 1" evidence="1">
    <location>
        <begin position="22"/>
        <end position="44"/>
    </location>
</feature>
<feature type="zinc finger region" description="C2H2-type 2" evidence="1">
    <location>
        <begin position="84"/>
        <end position="106"/>
    </location>
</feature>
<feature type="zinc finger region" description="C2H2-type 3" evidence="1">
    <location>
        <begin position="112"/>
        <end position="134"/>
    </location>
</feature>
<feature type="zinc finger region" description="C2H2-type 4" evidence="1">
    <location>
        <begin position="140"/>
        <end position="162"/>
    </location>
</feature>
<feature type="zinc finger region" description="C2H2-type 5" evidence="1">
    <location>
        <begin position="168"/>
        <end position="190"/>
    </location>
</feature>
<feature type="zinc finger region" description="C2H2-type 6" evidence="1">
    <location>
        <begin position="196"/>
        <end position="218"/>
    </location>
</feature>
<feature type="zinc finger region" description="C2H2-type 7" evidence="1">
    <location>
        <begin position="224"/>
        <end position="246"/>
    </location>
</feature>
<feature type="zinc finger region" description="C2H2-type 8" evidence="1">
    <location>
        <begin position="252"/>
        <end position="274"/>
    </location>
</feature>
<feature type="zinc finger region" description="C2H2-type 9" evidence="1">
    <location>
        <begin position="280"/>
        <end position="302"/>
    </location>
</feature>
<feature type="zinc finger region" description="C2H2-type 10" evidence="1">
    <location>
        <begin position="308"/>
        <end position="330"/>
    </location>
</feature>
<feature type="zinc finger region" description="C2H2-type 11" evidence="1">
    <location>
        <begin position="336"/>
        <end position="358"/>
    </location>
</feature>
<feature type="zinc finger region" description="C2H2-type 12" evidence="1">
    <location>
        <begin position="364"/>
        <end position="386"/>
    </location>
</feature>
<feature type="zinc finger region" description="C2H2-type 13" evidence="1">
    <location>
        <begin position="392"/>
        <end position="414"/>
    </location>
</feature>
<feature type="zinc finger region" description="C2H2-type 14" evidence="1">
    <location>
        <begin position="516"/>
        <end position="538"/>
    </location>
</feature>
<feature type="zinc finger region" description="C2H2-type 15" evidence="1">
    <location>
        <begin position="544"/>
        <end position="566"/>
    </location>
</feature>
<feature type="zinc finger region" description="C2H2-type 16" evidence="1">
    <location>
        <begin position="572"/>
        <end position="594"/>
    </location>
</feature>
<feature type="region of interest" description="Disordered" evidence="2">
    <location>
        <begin position="34"/>
        <end position="79"/>
    </location>
</feature>
<feature type="region of interest" description="Disordered" evidence="2">
    <location>
        <begin position="492"/>
        <end position="513"/>
    </location>
</feature>
<feature type="compositionally biased region" description="Basic and acidic residues" evidence="2">
    <location>
        <begin position="54"/>
        <end position="71"/>
    </location>
</feature>
<feature type="modified residue" description="N-acetylmethionine" evidence="9">
    <location>
        <position position="1"/>
    </location>
</feature>
<feature type="modified residue" description="Phosphoserine" evidence="10">
    <location>
        <position position="10"/>
    </location>
</feature>
<feature type="modified residue" description="Phosphoserine" evidence="8">
    <location>
        <position position="387"/>
    </location>
</feature>
<feature type="cross-link" description="Glycyl lysine isopeptide (Lys-Gly) (interchain with G-Cter in SUMO2)" evidence="11">
    <location>
        <position position="57"/>
    </location>
</feature>
<feature type="cross-link" description="Glycyl lysine isopeptide (Lys-Gly) (interchain with G-Cter in SUMO2)" evidence="11">
    <location>
        <position position="59"/>
    </location>
</feature>
<feature type="cross-link" description="Glycyl lysine isopeptide (Lys-Gly) (interchain with G-Cter in SUMO2)" evidence="11">
    <location>
        <position position="65"/>
    </location>
</feature>
<feature type="cross-link" description="Glycyl lysine isopeptide (Lys-Gly) (interchain with G-Cter in SUMO2)" evidence="11">
    <location>
        <position position="80"/>
    </location>
</feature>
<feature type="cross-link" description="Glycyl lysine isopeptide (Lys-Gly) (interchain with G-Cter in SUMO2)" evidence="11">
    <location>
        <position position="154"/>
    </location>
</feature>
<feature type="cross-link" description="Glycyl lysine isopeptide (Lys-Gly) (interchain with G-Cter in SUMO2)" evidence="11">
    <location>
        <position position="512"/>
    </location>
</feature>
<feature type="splice variant" id="VSP_053786" description="In isoform 2." evidence="7">
    <original>M</original>
    <variation>MSEPGMLGRKDVWVPRETPFTKAM</variation>
    <location>
        <position position="1"/>
    </location>
</feature>
<feature type="sequence variant" id="VAR_027689" description="In dbSNP:rs2032917.">
    <original>L</original>
    <variation>V</variation>
    <location>
        <position position="25"/>
    </location>
</feature>
<feature type="sequence variant" id="VAR_035595" description="In a breast cancer sample; somatic mutation; dbSNP:rs1429688220." evidence="4">
    <original>A</original>
    <variation>T</variation>
    <location>
        <position position="66"/>
    </location>
</feature>
<feature type="sequence variant" id="VAR_035596" description="In a breast cancer sample; somatic mutation; dbSNP:rs553159663." evidence="4">
    <original>G</original>
    <variation>S</variation>
    <location>
        <position position="286"/>
    </location>
</feature>
<feature type="sequence variant" id="VAR_027690" description="In dbSNP:rs17851949." evidence="3">
    <original>G</original>
    <variation>E</variation>
    <location>
        <position position="304"/>
    </location>
</feature>
<feature type="sequence variant" id="VAR_087999" description="In NEDGEF; increased DNA damage is detected in patient fibroblasts suggesting decreased function in DNA repair; no protein is detected in patient fibroblasts." evidence="5 6">
    <location>
        <begin position="319"/>
        <end position="619"/>
    </location>
</feature>
<feature type="sequence variant" id="VAR_035597" description="In a breast cancer sample; somatic mutation." evidence="4">
    <original>T</original>
    <variation>R</variation>
    <location>
        <position position="331"/>
    </location>
</feature>
<feature type="sequence variant" id="VAR_088000" description="In NEDGEF; increased DNA damage is detected in patient fibroblasts suggesting decreased function in DNA repair; reduced protein localization to the nucleus in patient fibroblasts." evidence="6">
    <location>
        <begin position="371"/>
        <end position="619"/>
    </location>
</feature>
<feature type="sequence variant" id="VAR_027691" description="In dbSNP:rs8046978.">
    <original>A</original>
    <variation>V</variation>
    <location>
        <position position="447"/>
    </location>
</feature>
<feature type="sequence variant" id="VAR_035598" description="In a breast cancer sample; somatic mutation; dbSNP:rs148738674." evidence="4">
    <original>R</original>
    <variation>Q</variation>
    <location>
        <position position="556"/>
    </location>
</feature>
<feature type="sequence conflict" description="In Ref. 1; BAB14602." evidence="7" ref="1">
    <original>H</original>
    <variation>R</variation>
    <location>
        <position position="130"/>
    </location>
</feature>
<feature type="sequence conflict" description="In Ref. 1; BAB55084." evidence="7" ref="1">
    <original>F</original>
    <variation>I</variation>
    <location>
        <position position="553"/>
    </location>
</feature>
<sequence length="619" mass="67904">MEVEAAEARSPAPGYKRSGRRYKCLSCTKTFPNAPRAARHAATHGPADCSEEVAEVKPKPETEAKAEEASGEKVSGSAAKPRPYACPLCPKAYKTAPELRSHGRSHTGEKPFPCPECGRRFMQPVCLRVHLASHAGELPFRCAHCPKAYGALSKLKIHQRGHTGERPYACADCGKSFADPSVFRKHRRTHAGLRPYSCERCGKAYAELKDLRNHERSHTGERPFLCSECGKSFSRSSSLTCHQRIHAAQKPYRCPACGKGFTQLSSYQSHERTHSGEKPFLCPRCGRMFSDPSSFRRHQRAHEGVKPYHCEKCGKDFRQPADLAMHRRVHTGDRPFKCLQCDKTFVASWDLKRHALVHSGQRPFRCEECGRAFAERASLTKHSRVHSGERPFHCNACGKSFVVSSSLRKHERTHRSSEAAGVPPAQELVVGLALPVGVAGESSAAPAAGAGLGDPPAGLLGLPPESGGVMATQWQVVGMTVEHVECQDAGVREAPGPLEGAGEAGGEEADEKPPQFVCRECKETFSTMTLLRRHERSHPELRPFPCTQCGKSFSDRAGLRKHSRTHSSVRPYTCPHCPKAFLSASDLRKHERTHPVPMGTPTPLEPLVALLGMPEEGPA</sequence>
<gene>
    <name type="primary">ZNF668</name>
</gene>